<comment type="function">
    <molecule>Heme oxygenase 2</molecule>
    <text evidence="2">Catalyzes the oxidative cleavage of heme at the alpha-methene bridge carbon, released as carbon monoxide (CO), to generate biliverdin IXalpha, while releasing the central heme iron chelate as ferrous iron.</text>
</comment>
<comment type="function">
    <molecule>Heme oxygenase 2 soluble form</molecule>
    <text evidence="2">Catalyzes the oxidative cleavage of heme at the alpha-methene bridge carbon, released as carbon monoxide (CO), to generate biliverdin IXalpha, while releasing the central heme iron chelate as ferrous iron.</text>
</comment>
<comment type="catalytic activity">
    <reaction evidence="2">
        <text>heme b + 3 reduced [NADPH--hemoprotein reductase] + 3 O2 = biliverdin IXalpha + CO + Fe(2+) + 3 oxidized [NADPH--hemoprotein reductase] + 3 H2O + H(+)</text>
        <dbReference type="Rhea" id="RHEA:21764"/>
        <dbReference type="Rhea" id="RHEA-COMP:11964"/>
        <dbReference type="Rhea" id="RHEA-COMP:11965"/>
        <dbReference type="ChEBI" id="CHEBI:15377"/>
        <dbReference type="ChEBI" id="CHEBI:15378"/>
        <dbReference type="ChEBI" id="CHEBI:15379"/>
        <dbReference type="ChEBI" id="CHEBI:17245"/>
        <dbReference type="ChEBI" id="CHEBI:29033"/>
        <dbReference type="ChEBI" id="CHEBI:57618"/>
        <dbReference type="ChEBI" id="CHEBI:57991"/>
        <dbReference type="ChEBI" id="CHEBI:58210"/>
        <dbReference type="ChEBI" id="CHEBI:60344"/>
        <dbReference type="EC" id="1.14.14.18"/>
    </reaction>
    <physiologicalReaction direction="left-to-right" evidence="2">
        <dbReference type="Rhea" id="RHEA:21765"/>
    </physiologicalReaction>
</comment>
<comment type="subcellular location">
    <subcellularLocation>
        <location evidence="2">Microsome membrane</location>
        <topology evidence="3">Single-pass type IV membrane protein</topology>
        <orientation evidence="1">Cytoplasmic side</orientation>
    </subcellularLocation>
    <subcellularLocation>
        <location evidence="1">Endoplasmic reticulum membrane</location>
        <topology evidence="3">Single-pass type IV membrane protein</topology>
        <orientation evidence="1">Cytoplasmic side</orientation>
    </subcellularLocation>
</comment>
<comment type="tissue specificity">
    <text evidence="5">Ubiquitous.</text>
</comment>
<comment type="PTM">
    <text evidence="2">A soluble form arises by proteolytic removal of the membrane anchor.</text>
</comment>
<comment type="PTM">
    <text evidence="2">S-nitrosylated by BLVRB.</text>
</comment>
<comment type="similarity">
    <text evidence="6">Belongs to the heme oxygenase family.</text>
</comment>
<proteinExistence type="evidence at protein level"/>
<evidence type="ECO:0000250" key="1">
    <source>
        <dbReference type="UniProtKB" id="P09601"/>
    </source>
</evidence>
<evidence type="ECO:0000250" key="2">
    <source>
        <dbReference type="UniProtKB" id="P30519"/>
    </source>
</evidence>
<evidence type="ECO:0000255" key="3"/>
<evidence type="ECO:0000256" key="4">
    <source>
        <dbReference type="SAM" id="MobiDB-lite"/>
    </source>
</evidence>
<evidence type="ECO:0000269" key="5">
    <source ref="1"/>
</evidence>
<evidence type="ECO:0000305" key="6"/>
<gene>
    <name type="primary">Hmox2</name>
</gene>
<reference key="1">
    <citation type="submission" date="1997-10" db="EMBL/GenBank/DDBJ databases">
        <title>Sequence of mouse heme oxygenase-2.</title>
        <authorList>
            <person name="Mount D.B."/>
        </authorList>
    </citation>
    <scope>NUCLEOTIDE SEQUENCE [MRNA]</scope>
    <source>
        <strain>CD-1</strain>
    </source>
</reference>
<reference key="2">
    <citation type="journal article" date="1998" name="Gene">
        <title>The identification and expression of heme oxygenase-2 alternative transcripts in the mouse.</title>
        <authorList>
            <person name="Gibbs L."/>
            <person name="Willis D."/>
            <person name="Morgan M.J."/>
        </authorList>
    </citation>
    <scope>NUCLEOTIDE SEQUENCE [MRNA]</scope>
    <scope>TISSUE SPECIFICITY</scope>
</reference>
<reference key="3">
    <citation type="journal article" date="2004" name="Genome Res.">
        <title>The status, quality, and expansion of the NIH full-length cDNA project: the Mammalian Gene Collection (MGC).</title>
        <authorList>
            <consortium name="The MGC Project Team"/>
        </authorList>
    </citation>
    <scope>NUCLEOTIDE SEQUENCE [LARGE SCALE MRNA]</scope>
    <source>
        <strain>C57BL/6J</strain>
        <tissue>Mammary gland</tissue>
    </source>
</reference>
<reference key="4">
    <citation type="journal article" date="2010" name="Cell">
        <title>A tissue-specific atlas of mouse protein phosphorylation and expression.</title>
        <authorList>
            <person name="Huttlin E.L."/>
            <person name="Jedrychowski M.P."/>
            <person name="Elias J.E."/>
            <person name="Goswami T."/>
            <person name="Rad R."/>
            <person name="Beausoleil S.A."/>
            <person name="Villen J."/>
            <person name="Haas W."/>
            <person name="Sowa M.E."/>
            <person name="Gygi S.P."/>
        </authorList>
    </citation>
    <scope>IDENTIFICATION BY MASS SPECTROMETRY [LARGE SCALE ANALYSIS]</scope>
    <source>
        <tissue>Brain</tissue>
        <tissue>Brown adipose tissue</tissue>
        <tissue>Heart</tissue>
        <tissue>Kidney</tissue>
        <tissue>Liver</tissue>
        <tissue>Lung</tissue>
        <tissue>Pancreas</tissue>
        <tissue>Spleen</tissue>
        <tissue>Testis</tissue>
    </source>
</reference>
<feature type="initiator methionine" description="Removed" evidence="2">
    <location>
        <position position="1"/>
    </location>
</feature>
<feature type="chain" id="PRO_0000209692" description="Heme oxygenase 2">
    <location>
        <begin position="2"/>
        <end position="315"/>
    </location>
</feature>
<feature type="chain" id="PRO_0000455627" description="Heme oxygenase 2 soluble form" evidence="2">
    <location>
        <begin position="2"/>
        <end position="294"/>
    </location>
</feature>
<feature type="topological domain" description="Cytoplasmic" evidence="1">
    <location>
        <begin position="2"/>
        <end position="294"/>
    </location>
</feature>
<feature type="transmembrane region" description="Helical; Anchor for type IV membrane protein" evidence="3">
    <location>
        <begin position="295"/>
        <end position="315"/>
    </location>
</feature>
<feature type="repeat" description="HRM 1">
    <location>
        <begin position="263"/>
        <end position="268"/>
    </location>
</feature>
<feature type="repeat" description="HRM 2">
    <location>
        <begin position="280"/>
        <end position="285"/>
    </location>
</feature>
<feature type="region of interest" description="Disordered" evidence="4">
    <location>
        <begin position="1"/>
        <end position="28"/>
    </location>
</feature>
<feature type="compositionally biased region" description="Acidic residues" evidence="4">
    <location>
        <begin position="1"/>
        <end position="12"/>
    </location>
</feature>
<feature type="compositionally biased region" description="Basic and acidic residues" evidence="4">
    <location>
        <begin position="13"/>
        <end position="28"/>
    </location>
</feature>
<feature type="binding site" description="axial binding residue" evidence="2">
    <location>
        <position position="44"/>
    </location>
    <ligand>
        <name>heme b</name>
        <dbReference type="ChEBI" id="CHEBI:60344"/>
    </ligand>
    <ligandPart>
        <name>Fe</name>
        <dbReference type="ChEBI" id="CHEBI:18248"/>
    </ligandPart>
</feature>
<feature type="binding site" evidence="2">
    <location>
        <position position="153"/>
    </location>
    <ligand>
        <name>heme b</name>
        <dbReference type="ChEBI" id="CHEBI:60344"/>
    </ligand>
</feature>
<feature type="binding site" evidence="2">
    <location>
        <position position="198"/>
    </location>
    <ligand>
        <name>heme b</name>
        <dbReference type="ChEBI" id="CHEBI:60344"/>
    </ligand>
</feature>
<feature type="binding site" evidence="2">
    <location>
        <position position="202"/>
    </location>
    <ligand>
        <name>heme b</name>
        <dbReference type="ChEBI" id="CHEBI:60344"/>
    </ligand>
</feature>
<feature type="site" description="Important for catalytic activity" evidence="1">
    <location>
        <position position="159"/>
    </location>
</feature>
<feature type="modified residue" description="N-acetylserine" evidence="2">
    <location>
        <position position="2"/>
    </location>
</feature>
<feature type="modified residue" description="Phosphoserine" evidence="2">
    <location>
        <position position="2"/>
    </location>
</feature>
<feature type="modified residue" description="S-nitrosocysteine" evidence="2">
    <location>
        <position position="264"/>
    </location>
</feature>
<feature type="modified residue" description="S-nitrosocysteine" evidence="2">
    <location>
        <position position="281"/>
    </location>
</feature>
<feature type="sequence conflict" description="In Ref. 2; AAC82364/AAC82363." evidence="6" ref="2">
    <original>RAL</original>
    <variation>SSS</variation>
    <location>
        <begin position="172"/>
        <end position="174"/>
    </location>
</feature>
<name>HMOX2_MOUSE</name>
<protein>
    <recommendedName>
        <fullName>Heme oxygenase 2</fullName>
        <shortName>HO-2</shortName>
        <ecNumber evidence="2">1.14.14.18</ecNumber>
    </recommendedName>
    <component>
        <recommendedName>
            <fullName evidence="2">Heme oxygenase 2 soluble form</fullName>
        </recommendedName>
    </component>
</protein>
<organism>
    <name type="scientific">Mus musculus</name>
    <name type="common">Mouse</name>
    <dbReference type="NCBI Taxonomy" id="10090"/>
    <lineage>
        <taxon>Eukaryota</taxon>
        <taxon>Metazoa</taxon>
        <taxon>Chordata</taxon>
        <taxon>Craniata</taxon>
        <taxon>Vertebrata</taxon>
        <taxon>Euteleostomi</taxon>
        <taxon>Mammalia</taxon>
        <taxon>Eutheria</taxon>
        <taxon>Euarchontoglires</taxon>
        <taxon>Glires</taxon>
        <taxon>Rodentia</taxon>
        <taxon>Myomorpha</taxon>
        <taxon>Muroidea</taxon>
        <taxon>Muridae</taxon>
        <taxon>Murinae</taxon>
        <taxon>Mus</taxon>
        <taxon>Mus</taxon>
    </lineage>
</organism>
<dbReference type="EC" id="1.14.14.18" evidence="2"/>
<dbReference type="EMBL" id="AF029874">
    <property type="protein sequence ID" value="AAC17981.1"/>
    <property type="molecule type" value="mRNA"/>
</dbReference>
<dbReference type="EMBL" id="AF054670">
    <property type="protein sequence ID" value="AAC82364.1"/>
    <property type="molecule type" value="mRNA"/>
</dbReference>
<dbReference type="EMBL" id="AF054669">
    <property type="protein sequence ID" value="AAC82363.1"/>
    <property type="molecule type" value="mRNA"/>
</dbReference>
<dbReference type="EMBL" id="BC002011">
    <property type="protein sequence ID" value="AAH02011.1"/>
    <property type="molecule type" value="mRNA"/>
</dbReference>
<dbReference type="CCDS" id="CCDS27924.1"/>
<dbReference type="PIR" id="JC5149">
    <property type="entry name" value="JC5149"/>
</dbReference>
<dbReference type="RefSeq" id="NP_001129538.1">
    <property type="nucleotide sequence ID" value="NM_001136066.2"/>
</dbReference>
<dbReference type="RefSeq" id="NP_034573.2">
    <property type="nucleotide sequence ID" value="NM_010443.2"/>
</dbReference>
<dbReference type="SMR" id="O70252"/>
<dbReference type="BioGRID" id="200345">
    <property type="interactions" value="12"/>
</dbReference>
<dbReference type="FunCoup" id="O70252">
    <property type="interactions" value="555"/>
</dbReference>
<dbReference type="IntAct" id="O70252">
    <property type="interactions" value="1"/>
</dbReference>
<dbReference type="MINT" id="O70252"/>
<dbReference type="STRING" id="10090.ENSMUSP00000004172"/>
<dbReference type="GlyGen" id="O70252">
    <property type="glycosylation" value="2 sites, 1 N-linked glycan (1 site), 1 O-linked glycan (1 site)"/>
</dbReference>
<dbReference type="iPTMnet" id="O70252"/>
<dbReference type="PhosphoSitePlus" id="O70252"/>
<dbReference type="SwissPalm" id="O70252"/>
<dbReference type="jPOST" id="O70252"/>
<dbReference type="PaxDb" id="10090-ENSMUSP00000004172"/>
<dbReference type="PeptideAtlas" id="O70252"/>
<dbReference type="ProteomicsDB" id="269578"/>
<dbReference type="Pumba" id="O70252"/>
<dbReference type="Antibodypedia" id="11116">
    <property type="antibodies" value="640 antibodies from 39 providers"/>
</dbReference>
<dbReference type="DNASU" id="15369"/>
<dbReference type="Ensembl" id="ENSMUST00000004172.15">
    <property type="protein sequence ID" value="ENSMUSP00000004172.9"/>
    <property type="gene ID" value="ENSMUSG00000004070.16"/>
</dbReference>
<dbReference type="Ensembl" id="ENSMUST00000118885.8">
    <property type="protein sequence ID" value="ENSMUSP00000113110.2"/>
    <property type="gene ID" value="ENSMUSG00000004070.16"/>
</dbReference>
<dbReference type="Ensembl" id="ENSMUST00000120232.8">
    <property type="protein sequence ID" value="ENSMUSP00000112397.2"/>
    <property type="gene ID" value="ENSMUSG00000004070.16"/>
</dbReference>
<dbReference type="GeneID" id="15369"/>
<dbReference type="KEGG" id="mmu:15369"/>
<dbReference type="UCSC" id="uc007yag.2">
    <property type="organism name" value="mouse"/>
</dbReference>
<dbReference type="AGR" id="MGI:109373"/>
<dbReference type="CTD" id="3163"/>
<dbReference type="MGI" id="MGI:109373">
    <property type="gene designation" value="Hmox2"/>
</dbReference>
<dbReference type="VEuPathDB" id="HostDB:ENSMUSG00000004070"/>
<dbReference type="eggNOG" id="KOG4480">
    <property type="taxonomic scope" value="Eukaryota"/>
</dbReference>
<dbReference type="GeneTree" id="ENSGT00390000017673"/>
<dbReference type="HOGENOM" id="CLU_057050_0_1_1"/>
<dbReference type="InParanoid" id="O70252"/>
<dbReference type="OMA" id="NRAFEYN"/>
<dbReference type="OrthoDB" id="652091at2759"/>
<dbReference type="PhylomeDB" id="O70252"/>
<dbReference type="TreeFam" id="TF314786"/>
<dbReference type="BRENDA" id="1.14.14.18">
    <property type="organism ID" value="3474"/>
</dbReference>
<dbReference type="Reactome" id="R-MMU-189483">
    <property type="pathway name" value="Heme degradation"/>
</dbReference>
<dbReference type="Reactome" id="R-MMU-6798695">
    <property type="pathway name" value="Neutrophil degranulation"/>
</dbReference>
<dbReference type="Reactome" id="R-MMU-8980692">
    <property type="pathway name" value="RHOA GTPase cycle"/>
</dbReference>
<dbReference type="Reactome" id="R-MMU-917937">
    <property type="pathway name" value="Iron uptake and transport"/>
</dbReference>
<dbReference type="Reactome" id="R-MMU-9707564">
    <property type="pathway name" value="Cytoprotection by HMOX1"/>
</dbReference>
<dbReference type="BioGRID-ORCS" id="15369">
    <property type="hits" value="3 hits in 77 CRISPR screens"/>
</dbReference>
<dbReference type="ChiTaRS" id="Hmox2">
    <property type="organism name" value="mouse"/>
</dbReference>
<dbReference type="PRO" id="PR:O70252"/>
<dbReference type="Proteomes" id="UP000000589">
    <property type="component" value="Chromosome 16"/>
</dbReference>
<dbReference type="RNAct" id="O70252">
    <property type="molecule type" value="protein"/>
</dbReference>
<dbReference type="Bgee" id="ENSMUSG00000004070">
    <property type="expression patterns" value="Expressed in spermatid and 271 other cell types or tissues"/>
</dbReference>
<dbReference type="ExpressionAtlas" id="O70252">
    <property type="expression patterns" value="baseline and differential"/>
</dbReference>
<dbReference type="GO" id="GO:0005789">
    <property type="term" value="C:endoplasmic reticulum membrane"/>
    <property type="evidence" value="ECO:0007669"/>
    <property type="project" value="UniProtKB-SubCell"/>
</dbReference>
<dbReference type="GO" id="GO:0005886">
    <property type="term" value="C:plasma membrane"/>
    <property type="evidence" value="ECO:0007669"/>
    <property type="project" value="Ensembl"/>
</dbReference>
<dbReference type="GO" id="GO:0004392">
    <property type="term" value="F:heme oxygenase (decyclizing) activity"/>
    <property type="evidence" value="ECO:0000250"/>
    <property type="project" value="UniProtKB"/>
</dbReference>
<dbReference type="GO" id="GO:0046872">
    <property type="term" value="F:metal ion binding"/>
    <property type="evidence" value="ECO:0007669"/>
    <property type="project" value="UniProtKB-KW"/>
</dbReference>
<dbReference type="GO" id="GO:0010106">
    <property type="term" value="P:cellular response to iron ion starvation"/>
    <property type="evidence" value="ECO:0000250"/>
    <property type="project" value="MGI"/>
</dbReference>
<dbReference type="GO" id="GO:0006788">
    <property type="term" value="P:heme oxidation"/>
    <property type="evidence" value="ECO:0007669"/>
    <property type="project" value="InterPro"/>
</dbReference>
<dbReference type="GO" id="GO:0001666">
    <property type="term" value="P:response to hypoxia"/>
    <property type="evidence" value="ECO:0007669"/>
    <property type="project" value="Ensembl"/>
</dbReference>
<dbReference type="CDD" id="cd19165">
    <property type="entry name" value="HemeO"/>
    <property type="match status" value="1"/>
</dbReference>
<dbReference type="FunFam" id="1.20.910.10:FF:000001">
    <property type="entry name" value="Heme oxygenase 1"/>
    <property type="match status" value="1"/>
</dbReference>
<dbReference type="Gene3D" id="1.20.910.10">
    <property type="entry name" value="Heme oxygenase-like"/>
    <property type="match status" value="1"/>
</dbReference>
<dbReference type="InterPro" id="IPR002051">
    <property type="entry name" value="Haem_Oase"/>
</dbReference>
<dbReference type="InterPro" id="IPR016053">
    <property type="entry name" value="Haem_Oase-like"/>
</dbReference>
<dbReference type="InterPro" id="IPR016084">
    <property type="entry name" value="Haem_Oase-like_multi-hlx"/>
</dbReference>
<dbReference type="InterPro" id="IPR018207">
    <property type="entry name" value="Haem_oxygenase_CS"/>
</dbReference>
<dbReference type="PANTHER" id="PTHR10720">
    <property type="entry name" value="HEME OXYGENASE"/>
    <property type="match status" value="1"/>
</dbReference>
<dbReference type="PANTHER" id="PTHR10720:SF2">
    <property type="entry name" value="HEME OXYGENASE 2"/>
    <property type="match status" value="1"/>
</dbReference>
<dbReference type="Pfam" id="PF01126">
    <property type="entry name" value="Heme_oxygenase"/>
    <property type="match status" value="1"/>
</dbReference>
<dbReference type="PIRSF" id="PIRSF000343">
    <property type="entry name" value="Haem_Oase"/>
    <property type="match status" value="1"/>
</dbReference>
<dbReference type="PRINTS" id="PR00088">
    <property type="entry name" value="HAEMOXYGNASE"/>
</dbReference>
<dbReference type="SUPFAM" id="SSF48613">
    <property type="entry name" value="Heme oxygenase-like"/>
    <property type="match status" value="1"/>
</dbReference>
<dbReference type="PROSITE" id="PS00593">
    <property type="entry name" value="HEME_OXYGENASE"/>
    <property type="match status" value="1"/>
</dbReference>
<accession>O70252</accession>
<accession>O70626</accession>
<keyword id="KW-0007">Acetylation</keyword>
<keyword id="KW-0256">Endoplasmic reticulum</keyword>
<keyword id="KW-0349">Heme</keyword>
<keyword id="KW-0408">Iron</keyword>
<keyword id="KW-0472">Membrane</keyword>
<keyword id="KW-0479">Metal-binding</keyword>
<keyword id="KW-0492">Microsome</keyword>
<keyword id="KW-0560">Oxidoreductase</keyword>
<keyword id="KW-0597">Phosphoprotein</keyword>
<keyword id="KW-1185">Reference proteome</keyword>
<keyword id="KW-0677">Repeat</keyword>
<keyword id="KW-0702">S-nitrosylation</keyword>
<keyword id="KW-0812">Transmembrane</keyword>
<keyword id="KW-1133">Transmembrane helix</keyword>
<sequence>MSSEVETSEGVDESEKNSMAPEKENHTKMADLSELLKEGTKEAHDRAENTQFVKDFLKGNIKKELFKLATTALYFTYSALEEEMDRNKDHPAFAPLYFPTELHRKAALIKDMKYFFGENWEEQVKCSEAAQKYVDRIHYVGQNEPELLVAHAYTRYMGDLSGGQVLKKVAQRALKLPSTGEGTQFYLFEHVDNAQQFKQFYRARMNALDLNLKTKERIVEEANKAFEYNMQIFSELDQAGSMLARETLEDGLPVHDGKGDIRKCPFYAAQPDKGTLGGSNCPFQTTVAVLRKPSLQLILAASVALVAGLLAWYYM</sequence>